<evidence type="ECO:0000250" key="1"/>
<evidence type="ECO:0000255" key="2"/>
<evidence type="ECO:0000305" key="3"/>
<proteinExistence type="inferred from homology"/>
<reference key="1">
    <citation type="journal article" date="2002" name="Nucleic Acids Res.">
        <title>Genome sequence of Shigella flexneri 2a: insights into pathogenicity through comparison with genomes of Escherichia coli K12 and O157.</title>
        <authorList>
            <person name="Jin Q."/>
            <person name="Yuan Z."/>
            <person name="Xu J."/>
            <person name="Wang Y."/>
            <person name="Shen Y."/>
            <person name="Lu W."/>
            <person name="Wang J."/>
            <person name="Liu H."/>
            <person name="Yang J."/>
            <person name="Yang F."/>
            <person name="Zhang X."/>
            <person name="Zhang J."/>
            <person name="Yang G."/>
            <person name="Wu H."/>
            <person name="Qu D."/>
            <person name="Dong J."/>
            <person name="Sun L."/>
            <person name="Xue Y."/>
            <person name="Zhao A."/>
            <person name="Gao Y."/>
            <person name="Zhu J."/>
            <person name="Kan B."/>
            <person name="Ding K."/>
            <person name="Chen S."/>
            <person name="Cheng H."/>
            <person name="Yao Z."/>
            <person name="He B."/>
            <person name="Chen R."/>
            <person name="Ma D."/>
            <person name="Qiang B."/>
            <person name="Wen Y."/>
            <person name="Hou Y."/>
            <person name="Yu J."/>
        </authorList>
    </citation>
    <scope>NUCLEOTIDE SEQUENCE [LARGE SCALE GENOMIC DNA]</scope>
    <source>
        <strain>301 / Serotype 2a</strain>
    </source>
</reference>
<reference key="2">
    <citation type="journal article" date="2003" name="Infect. Immun.">
        <title>Complete genome sequence and comparative genomics of Shigella flexneri serotype 2a strain 2457T.</title>
        <authorList>
            <person name="Wei J."/>
            <person name="Goldberg M.B."/>
            <person name="Burland V."/>
            <person name="Venkatesan M.M."/>
            <person name="Deng W."/>
            <person name="Fournier G."/>
            <person name="Mayhew G.F."/>
            <person name="Plunkett G. III"/>
            <person name="Rose D.J."/>
            <person name="Darling A."/>
            <person name="Mau B."/>
            <person name="Perna N.T."/>
            <person name="Payne S.M."/>
            <person name="Runyen-Janecky L.J."/>
            <person name="Zhou S."/>
            <person name="Schwartz D.C."/>
            <person name="Blattner F.R."/>
        </authorList>
    </citation>
    <scope>NUCLEOTIDE SEQUENCE [LARGE SCALE GENOMIC DNA]</scope>
    <source>
        <strain>ATCC 700930 / 2457T / Serotype 2a</strain>
    </source>
</reference>
<feature type="chain" id="PRO_0000351351" description="Autoinducer 2 import system permease protein LsrC">
    <location>
        <begin position="1"/>
        <end position="342"/>
    </location>
</feature>
<feature type="topological domain" description="Periplasmic" evidence="2">
    <location>
        <begin position="1"/>
        <end position="13"/>
    </location>
</feature>
<feature type="transmembrane region" description="Helical" evidence="2">
    <location>
        <begin position="14"/>
        <end position="34"/>
    </location>
</feature>
<feature type="topological domain" description="Cytoplasmic" evidence="2">
    <location>
        <begin position="35"/>
        <end position="38"/>
    </location>
</feature>
<feature type="transmembrane region" description="Helical" evidence="2">
    <location>
        <begin position="39"/>
        <end position="59"/>
    </location>
</feature>
<feature type="topological domain" description="Periplasmic" evidence="2">
    <location>
        <begin position="60"/>
        <end position="69"/>
    </location>
</feature>
<feature type="transmembrane region" description="Helical" evidence="2">
    <location>
        <begin position="70"/>
        <end position="90"/>
    </location>
</feature>
<feature type="topological domain" description="Cytoplasmic" evidence="2">
    <location>
        <begin position="91"/>
        <end position="92"/>
    </location>
</feature>
<feature type="transmembrane region" description="Helical" evidence="2">
    <location>
        <begin position="93"/>
        <end position="113"/>
    </location>
</feature>
<feature type="topological domain" description="Periplasmic" evidence="2">
    <location>
        <position position="114"/>
    </location>
</feature>
<feature type="transmembrane region" description="Helical" evidence="2">
    <location>
        <begin position="115"/>
        <end position="135"/>
    </location>
</feature>
<feature type="topological domain" description="Cytoplasmic" evidence="2">
    <location>
        <begin position="136"/>
        <end position="154"/>
    </location>
</feature>
<feature type="transmembrane region" description="Helical" evidence="2">
    <location>
        <begin position="155"/>
        <end position="175"/>
    </location>
</feature>
<feature type="topological domain" description="Periplasmic" evidence="2">
    <location>
        <begin position="176"/>
        <end position="212"/>
    </location>
</feature>
<feature type="transmembrane region" description="Helical" evidence="2">
    <location>
        <begin position="213"/>
        <end position="233"/>
    </location>
</feature>
<feature type="topological domain" description="Cytoplasmic" evidence="2">
    <location>
        <begin position="234"/>
        <end position="251"/>
    </location>
</feature>
<feature type="transmembrane region" description="Helical" evidence="2">
    <location>
        <begin position="252"/>
        <end position="272"/>
    </location>
</feature>
<feature type="topological domain" description="Periplasmic" evidence="2">
    <location>
        <begin position="273"/>
        <end position="283"/>
    </location>
</feature>
<feature type="transmembrane region" description="Helical" evidence="2">
    <location>
        <begin position="284"/>
        <end position="304"/>
    </location>
</feature>
<feature type="topological domain" description="Cytoplasmic" evidence="2">
    <location>
        <begin position="305"/>
        <end position="342"/>
    </location>
</feature>
<organism>
    <name type="scientific">Shigella flexneri</name>
    <dbReference type="NCBI Taxonomy" id="623"/>
    <lineage>
        <taxon>Bacteria</taxon>
        <taxon>Pseudomonadati</taxon>
        <taxon>Pseudomonadota</taxon>
        <taxon>Gammaproteobacteria</taxon>
        <taxon>Enterobacterales</taxon>
        <taxon>Enterobacteriaceae</taxon>
        <taxon>Shigella</taxon>
    </lineage>
</organism>
<accession>Q83RD8</accession>
<accession>Q7C1J1</accession>
<gene>
    <name type="primary">lsrC</name>
    <name type="ordered locus">SF1584</name>
    <name type="ordered locus">S1710</name>
</gene>
<comment type="function">
    <text evidence="1">Part of the ABC transporter complex LsrABCD involved in autoinducer 2 (AI-2) import. Probably responsible for the translocation of the substrate across the membrane (By similarity).</text>
</comment>
<comment type="subunit">
    <text evidence="1">The complex is composed of two ATP-binding proteins (LsrA), two transmembrane proteins (LsrC and LsrD) and a solute-binding protein (LsrB).</text>
</comment>
<comment type="subcellular location">
    <subcellularLocation>
        <location evidence="1">Cell inner membrane</location>
        <topology evidence="1">Multi-pass membrane protein</topology>
    </subcellularLocation>
</comment>
<comment type="similarity">
    <text evidence="3">Belongs to the binding-protein-dependent transport system permease family. AraH/RbsC subfamily.</text>
</comment>
<protein>
    <recommendedName>
        <fullName>Autoinducer 2 import system permease protein LsrC</fullName>
        <shortName>AI-2 import system permease protein LsrC</shortName>
    </recommendedName>
</protein>
<keyword id="KW-0997">Cell inner membrane</keyword>
<keyword id="KW-1003">Cell membrane</keyword>
<keyword id="KW-0472">Membrane</keyword>
<keyword id="KW-1185">Reference proteome</keyword>
<keyword id="KW-0812">Transmembrane</keyword>
<keyword id="KW-1133">Transmembrane helix</keyword>
<keyword id="KW-0813">Transport</keyword>
<sequence length="342" mass="36397">MLKFIQNNREITALLAVVLLFVLPGFLDRQYLSVQTLTMVYSSAQILILLAMGATLVMLTRNIDVSVGSITGMCAVLLGMLLNAGYSLPVACVATLLLGLLAGFFNGALVAWLKIPAIVATLGTLGLYRGIMLLWTGGKWIEGLPAELKQLSAPLLLGISAIGWLTIILVAFMAWLLAKTAFGRSFYATGDNLQGARQLGVRTEAIRIVAFSLNGCMAALAGIVFASQIGFILNQTGTGLEMKAIAACVLGGISLLGGSGAIIGAVLGAWFLTQIDSVLVLLRIPAWWNDFIAGLVLLAVLVFDGRLRCALERNLRRQKYARFMTPPPSVKPASSGKKREAA</sequence>
<name>LSRC_SHIFL</name>
<dbReference type="EMBL" id="AE005674">
    <property type="protein sequence ID" value="AAN43171.1"/>
    <property type="molecule type" value="Genomic_DNA"/>
</dbReference>
<dbReference type="EMBL" id="AE014073">
    <property type="protein sequence ID" value="AAP17063.1"/>
    <property type="molecule type" value="Genomic_DNA"/>
</dbReference>
<dbReference type="RefSeq" id="WP_000911160.1">
    <property type="nucleotide sequence ID" value="NZ_WPGW01000160.1"/>
</dbReference>
<dbReference type="STRING" id="198214.SF1584"/>
<dbReference type="PaxDb" id="198214-SF1584"/>
<dbReference type="KEGG" id="sfl:SF1584"/>
<dbReference type="KEGG" id="sfx:S1710"/>
<dbReference type="PATRIC" id="fig|198214.7.peg.1873"/>
<dbReference type="HOGENOM" id="CLU_028880_0_1_6"/>
<dbReference type="Proteomes" id="UP000001006">
    <property type="component" value="Chromosome"/>
</dbReference>
<dbReference type="Proteomes" id="UP000002673">
    <property type="component" value="Chromosome"/>
</dbReference>
<dbReference type="GO" id="GO:0005886">
    <property type="term" value="C:plasma membrane"/>
    <property type="evidence" value="ECO:0007669"/>
    <property type="project" value="UniProtKB-SubCell"/>
</dbReference>
<dbReference type="GO" id="GO:0022857">
    <property type="term" value="F:transmembrane transporter activity"/>
    <property type="evidence" value="ECO:0007669"/>
    <property type="project" value="InterPro"/>
</dbReference>
<dbReference type="CDD" id="cd06579">
    <property type="entry name" value="TM_PBP1_transp_AraH_like"/>
    <property type="match status" value="1"/>
</dbReference>
<dbReference type="InterPro" id="IPR001851">
    <property type="entry name" value="ABC_transp_permease"/>
</dbReference>
<dbReference type="NCBIfam" id="NF011961">
    <property type="entry name" value="PRK15432.1"/>
    <property type="match status" value="1"/>
</dbReference>
<dbReference type="PANTHER" id="PTHR32196">
    <property type="entry name" value="ABC TRANSPORTER PERMEASE PROTEIN YPHD-RELATED-RELATED"/>
    <property type="match status" value="1"/>
</dbReference>
<dbReference type="PANTHER" id="PTHR32196:SF29">
    <property type="entry name" value="AUTOINDUCER 2 IMPORT SYSTEM PERMEASE PROTEIN LSRC"/>
    <property type="match status" value="1"/>
</dbReference>
<dbReference type="Pfam" id="PF02653">
    <property type="entry name" value="BPD_transp_2"/>
    <property type="match status" value="1"/>
</dbReference>